<evidence type="ECO:0000255" key="1">
    <source>
        <dbReference type="HAMAP-Rule" id="MF_03137"/>
    </source>
</evidence>
<evidence type="ECO:0000305" key="2"/>
<dbReference type="EC" id="3.6.5.-"/>
<dbReference type="EMBL" id="CU329670">
    <property type="protein sequence ID" value="CAB11233.2"/>
    <property type="molecule type" value="Genomic_DNA"/>
</dbReference>
<dbReference type="PIR" id="T38022">
    <property type="entry name" value="T38022"/>
</dbReference>
<dbReference type="RefSeq" id="NP_594788.2">
    <property type="nucleotide sequence ID" value="NM_001020216.2"/>
</dbReference>
<dbReference type="SMR" id="O13869"/>
<dbReference type="BioGRID" id="278987">
    <property type="interactions" value="3"/>
</dbReference>
<dbReference type="FunCoup" id="O13869">
    <property type="interactions" value="435"/>
</dbReference>
<dbReference type="STRING" id="284812.O13869"/>
<dbReference type="PaxDb" id="4896-SPAC1B3.04c.1"/>
<dbReference type="EnsemblFungi" id="SPAC1B3.04c.1">
    <property type="protein sequence ID" value="SPAC1B3.04c.1:pep"/>
    <property type="gene ID" value="SPAC1B3.04c"/>
</dbReference>
<dbReference type="GeneID" id="2542529"/>
<dbReference type="KEGG" id="spo:2542529"/>
<dbReference type="PomBase" id="SPAC1B3.04c">
    <property type="gene designation" value="guf1"/>
</dbReference>
<dbReference type="VEuPathDB" id="FungiDB:SPAC1B3.04c"/>
<dbReference type="eggNOG" id="KOG0462">
    <property type="taxonomic scope" value="Eukaryota"/>
</dbReference>
<dbReference type="HOGENOM" id="CLU_009995_3_1_1"/>
<dbReference type="InParanoid" id="O13869"/>
<dbReference type="OMA" id="QVKCDEN"/>
<dbReference type="PRO" id="PR:O13869"/>
<dbReference type="Proteomes" id="UP000002485">
    <property type="component" value="Chromosome I"/>
</dbReference>
<dbReference type="GO" id="GO:0005743">
    <property type="term" value="C:mitochondrial inner membrane"/>
    <property type="evidence" value="ECO:0007669"/>
    <property type="project" value="UniProtKB-SubCell"/>
</dbReference>
<dbReference type="GO" id="GO:0005759">
    <property type="term" value="C:mitochondrial matrix"/>
    <property type="evidence" value="ECO:0000266"/>
    <property type="project" value="PomBase"/>
</dbReference>
<dbReference type="GO" id="GO:0005739">
    <property type="term" value="C:mitochondrion"/>
    <property type="evidence" value="ECO:0007005"/>
    <property type="project" value="PomBase"/>
</dbReference>
<dbReference type="GO" id="GO:0005525">
    <property type="term" value="F:GTP binding"/>
    <property type="evidence" value="ECO:0000250"/>
    <property type="project" value="PomBase"/>
</dbReference>
<dbReference type="GO" id="GO:0003924">
    <property type="term" value="F:GTPase activity"/>
    <property type="evidence" value="ECO:0000266"/>
    <property type="project" value="PomBase"/>
</dbReference>
<dbReference type="GO" id="GO:0097177">
    <property type="term" value="F:mitochondrial ribosome binding"/>
    <property type="evidence" value="ECO:0000318"/>
    <property type="project" value="GO_Central"/>
</dbReference>
<dbReference type="GO" id="GO:0003746">
    <property type="term" value="F:translation elongation factor activity"/>
    <property type="evidence" value="ECO:0000266"/>
    <property type="project" value="PomBase"/>
</dbReference>
<dbReference type="GO" id="GO:0070125">
    <property type="term" value="P:mitochondrial translational elongation"/>
    <property type="evidence" value="ECO:0000266"/>
    <property type="project" value="PomBase"/>
</dbReference>
<dbReference type="GO" id="GO:0045727">
    <property type="term" value="P:positive regulation of translation"/>
    <property type="evidence" value="ECO:0000318"/>
    <property type="project" value="GO_Central"/>
</dbReference>
<dbReference type="CDD" id="cd03699">
    <property type="entry name" value="EF4_II"/>
    <property type="match status" value="1"/>
</dbReference>
<dbReference type="CDD" id="cd16260">
    <property type="entry name" value="EF4_III"/>
    <property type="match status" value="1"/>
</dbReference>
<dbReference type="CDD" id="cd01890">
    <property type="entry name" value="LepA"/>
    <property type="match status" value="1"/>
</dbReference>
<dbReference type="CDD" id="cd03709">
    <property type="entry name" value="lepA_C"/>
    <property type="match status" value="1"/>
</dbReference>
<dbReference type="FunFam" id="3.40.50.300:FF:000078">
    <property type="entry name" value="Elongation factor 4"/>
    <property type="match status" value="1"/>
</dbReference>
<dbReference type="FunFam" id="2.40.30.10:FF:000015">
    <property type="entry name" value="Translation factor GUF1, mitochondrial"/>
    <property type="match status" value="1"/>
</dbReference>
<dbReference type="FunFam" id="3.30.70.240:FF:000007">
    <property type="entry name" value="Translation factor GUF1, mitochondrial"/>
    <property type="match status" value="1"/>
</dbReference>
<dbReference type="FunFam" id="3.30.70.2570:FF:000001">
    <property type="entry name" value="Translation factor GUF1, mitochondrial"/>
    <property type="match status" value="1"/>
</dbReference>
<dbReference type="FunFam" id="3.30.70.870:FF:000004">
    <property type="entry name" value="Translation factor GUF1, mitochondrial"/>
    <property type="match status" value="1"/>
</dbReference>
<dbReference type="Gene3D" id="3.30.70.240">
    <property type="match status" value="1"/>
</dbReference>
<dbReference type="Gene3D" id="3.30.70.2570">
    <property type="entry name" value="Elongation factor 4, C-terminal domain"/>
    <property type="match status" value="1"/>
</dbReference>
<dbReference type="Gene3D" id="3.30.70.870">
    <property type="entry name" value="Elongation Factor G (Translational Gtpase), domain 3"/>
    <property type="match status" value="1"/>
</dbReference>
<dbReference type="Gene3D" id="3.40.50.300">
    <property type="entry name" value="P-loop containing nucleotide triphosphate hydrolases"/>
    <property type="match status" value="1"/>
</dbReference>
<dbReference type="Gene3D" id="2.40.30.10">
    <property type="entry name" value="Translation factors"/>
    <property type="match status" value="1"/>
</dbReference>
<dbReference type="HAMAP" id="MF_00071">
    <property type="entry name" value="LepA"/>
    <property type="match status" value="1"/>
</dbReference>
<dbReference type="InterPro" id="IPR006297">
    <property type="entry name" value="EF-4"/>
</dbReference>
<dbReference type="InterPro" id="IPR035647">
    <property type="entry name" value="EFG_III/V"/>
</dbReference>
<dbReference type="InterPro" id="IPR000640">
    <property type="entry name" value="EFG_V-like"/>
</dbReference>
<dbReference type="InterPro" id="IPR004161">
    <property type="entry name" value="EFTu-like_2"/>
</dbReference>
<dbReference type="InterPro" id="IPR031157">
    <property type="entry name" value="G_TR_CS"/>
</dbReference>
<dbReference type="InterPro" id="IPR038363">
    <property type="entry name" value="LepA_C_sf"/>
</dbReference>
<dbReference type="InterPro" id="IPR013842">
    <property type="entry name" value="LepA_CTD"/>
</dbReference>
<dbReference type="InterPro" id="IPR035654">
    <property type="entry name" value="LepA_IV"/>
</dbReference>
<dbReference type="InterPro" id="IPR027417">
    <property type="entry name" value="P-loop_NTPase"/>
</dbReference>
<dbReference type="InterPro" id="IPR005225">
    <property type="entry name" value="Small_GTP-bd"/>
</dbReference>
<dbReference type="InterPro" id="IPR000795">
    <property type="entry name" value="T_Tr_GTP-bd_dom"/>
</dbReference>
<dbReference type="InterPro" id="IPR009000">
    <property type="entry name" value="Transl_B-barrel_sf"/>
</dbReference>
<dbReference type="NCBIfam" id="TIGR01393">
    <property type="entry name" value="lepA"/>
    <property type="match status" value="1"/>
</dbReference>
<dbReference type="NCBIfam" id="TIGR00231">
    <property type="entry name" value="small_GTP"/>
    <property type="match status" value="1"/>
</dbReference>
<dbReference type="PANTHER" id="PTHR43512:SF7">
    <property type="entry name" value="TRANSLATION FACTOR GUF1, MITOCHONDRIAL"/>
    <property type="match status" value="1"/>
</dbReference>
<dbReference type="PANTHER" id="PTHR43512">
    <property type="entry name" value="TRANSLATION FACTOR GUF1-RELATED"/>
    <property type="match status" value="1"/>
</dbReference>
<dbReference type="Pfam" id="PF00679">
    <property type="entry name" value="EFG_C"/>
    <property type="match status" value="1"/>
</dbReference>
<dbReference type="Pfam" id="PF00009">
    <property type="entry name" value="GTP_EFTU"/>
    <property type="match status" value="1"/>
</dbReference>
<dbReference type="Pfam" id="PF03144">
    <property type="entry name" value="GTP_EFTU_D2"/>
    <property type="match status" value="1"/>
</dbReference>
<dbReference type="Pfam" id="PF06421">
    <property type="entry name" value="LepA_C"/>
    <property type="match status" value="1"/>
</dbReference>
<dbReference type="PRINTS" id="PR00315">
    <property type="entry name" value="ELONGATNFCT"/>
</dbReference>
<dbReference type="SUPFAM" id="SSF54980">
    <property type="entry name" value="EF-G C-terminal domain-like"/>
    <property type="match status" value="2"/>
</dbReference>
<dbReference type="SUPFAM" id="SSF52540">
    <property type="entry name" value="P-loop containing nucleoside triphosphate hydrolases"/>
    <property type="match status" value="1"/>
</dbReference>
<dbReference type="SUPFAM" id="SSF50447">
    <property type="entry name" value="Translation proteins"/>
    <property type="match status" value="1"/>
</dbReference>
<dbReference type="PROSITE" id="PS00301">
    <property type="entry name" value="G_TR_1"/>
    <property type="match status" value="1"/>
</dbReference>
<dbReference type="PROSITE" id="PS51722">
    <property type="entry name" value="G_TR_2"/>
    <property type="match status" value="1"/>
</dbReference>
<keyword id="KW-0342">GTP-binding</keyword>
<keyword id="KW-0378">Hydrolase</keyword>
<keyword id="KW-0472">Membrane</keyword>
<keyword id="KW-0496">Mitochondrion</keyword>
<keyword id="KW-0999">Mitochondrion inner membrane</keyword>
<keyword id="KW-0547">Nucleotide-binding</keyword>
<keyword id="KW-0648">Protein biosynthesis</keyword>
<keyword id="KW-1185">Reference proteome</keyword>
<keyword id="KW-0809">Transit peptide</keyword>
<proteinExistence type="inferred from homology"/>
<protein>
    <recommendedName>
        <fullName evidence="1">Translation factor guf1, mitochondrial</fullName>
        <ecNumber>3.6.5.-</ecNumber>
    </recommendedName>
    <alternativeName>
        <fullName evidence="1">Elongation factor 4 homolog</fullName>
        <shortName evidence="1">EF-4</shortName>
    </alternativeName>
    <alternativeName>
        <fullName evidence="1">GTPase guf1</fullName>
    </alternativeName>
    <alternativeName>
        <fullName evidence="1">Ribosomal back-translocase</fullName>
    </alternativeName>
</protein>
<sequence length="652" mass="73522">MSIFRLSRTFSLETCLKSSSFKIRWRFFSVSYASRKLASEDNKPSIQEVVRGIPQNRVRNWAVIAHIDHGKSTLSDCILKLTGVINEHNFRNQFLDKLEVERRRGITVKAQTCSMIYYYHGQSYLLNLIDTPGHVDFRAEVMHSLAACEGCILLVDASQGIQAQTLSNFYMAFSQNLVIIPVLNKVDLPTADVDRTLIQVQQTFDIPMSKPILVSSKTGKNVEQILPEIIQKIPPPKGSENAPLRCLLIDSWYNSYQGVIGLVRIMEGFIKKGGKVMSVNTGRKYEVQQVGIMYPDMTEVSRLRAGQVGYIIWNMKNIDEAIVGDTYSTIGSNVEALPGFSIPQSMVYVGAFPLDGSDYERLNDNIEQLALNDRAINVQKENSSALGMGWRLGFLGTLHLSVFIDRLKDEYGKELLITSPTVPYRIKYKNGREEVISNPNLFPTNHQGISELLEPTVDATIITPSEYLGDVIKLCESCRGLQKDCTYMSESRCMIKYQLPLAHLVEDFFGRLKGTTSGFATLDYEESDYVPADLVRLSIFMSGKSVDALCSIVHRSLALQRGREWIQRLKPLVPKQLYEVILQAVIDNRVVARESISALRKNVTAKCYGGDVTRKQKLLNKQKEGKKRLKSVGNVSIDKSVFYEFLTKKQSN</sequence>
<comment type="function">
    <text evidence="1">Promotes mitochondrial protein synthesis. May act as a fidelity factor of the translation reaction, by catalyzing a one-codon backward translocation of tRNAs on improperly translocated ribosomes. Binds to mitochondrial ribosomes in a GTP-dependent manner.</text>
</comment>
<comment type="catalytic activity">
    <reaction evidence="1">
        <text>GTP + H2O = GDP + phosphate + H(+)</text>
        <dbReference type="Rhea" id="RHEA:19669"/>
        <dbReference type="ChEBI" id="CHEBI:15377"/>
        <dbReference type="ChEBI" id="CHEBI:15378"/>
        <dbReference type="ChEBI" id="CHEBI:37565"/>
        <dbReference type="ChEBI" id="CHEBI:43474"/>
        <dbReference type="ChEBI" id="CHEBI:58189"/>
    </reaction>
</comment>
<comment type="subcellular location">
    <subcellularLocation>
        <location evidence="1">Mitochondrion inner membrane</location>
        <topology evidence="1">Peripheral membrane protein</topology>
        <orientation evidence="1">Matrix side</orientation>
    </subcellularLocation>
</comment>
<comment type="similarity">
    <text evidence="2">Belongs to the TRAFAC class translation factor GTPase superfamily. Classic translation factor GTPase family. LepA subfamily.</text>
</comment>
<gene>
    <name type="primary">guf1</name>
    <name type="ORF">SPAC1B3.04c</name>
</gene>
<reference key="1">
    <citation type="journal article" date="2002" name="Nature">
        <title>The genome sequence of Schizosaccharomyces pombe.</title>
        <authorList>
            <person name="Wood V."/>
            <person name="Gwilliam R."/>
            <person name="Rajandream M.A."/>
            <person name="Lyne M.H."/>
            <person name="Lyne R."/>
            <person name="Stewart A."/>
            <person name="Sgouros J.G."/>
            <person name="Peat N."/>
            <person name="Hayles J."/>
            <person name="Baker S.G."/>
            <person name="Basham D."/>
            <person name="Bowman S."/>
            <person name="Brooks K."/>
            <person name="Brown D."/>
            <person name="Brown S."/>
            <person name="Chillingworth T."/>
            <person name="Churcher C.M."/>
            <person name="Collins M."/>
            <person name="Connor R."/>
            <person name="Cronin A."/>
            <person name="Davis P."/>
            <person name="Feltwell T."/>
            <person name="Fraser A."/>
            <person name="Gentles S."/>
            <person name="Goble A."/>
            <person name="Hamlin N."/>
            <person name="Harris D.E."/>
            <person name="Hidalgo J."/>
            <person name="Hodgson G."/>
            <person name="Holroyd S."/>
            <person name="Hornsby T."/>
            <person name="Howarth S."/>
            <person name="Huckle E.J."/>
            <person name="Hunt S."/>
            <person name="Jagels K."/>
            <person name="James K.D."/>
            <person name="Jones L."/>
            <person name="Jones M."/>
            <person name="Leather S."/>
            <person name="McDonald S."/>
            <person name="McLean J."/>
            <person name="Mooney P."/>
            <person name="Moule S."/>
            <person name="Mungall K.L."/>
            <person name="Murphy L.D."/>
            <person name="Niblett D."/>
            <person name="Odell C."/>
            <person name="Oliver K."/>
            <person name="O'Neil S."/>
            <person name="Pearson D."/>
            <person name="Quail M.A."/>
            <person name="Rabbinowitsch E."/>
            <person name="Rutherford K.M."/>
            <person name="Rutter S."/>
            <person name="Saunders D."/>
            <person name="Seeger K."/>
            <person name="Sharp S."/>
            <person name="Skelton J."/>
            <person name="Simmonds M.N."/>
            <person name="Squares R."/>
            <person name="Squares S."/>
            <person name="Stevens K."/>
            <person name="Taylor K."/>
            <person name="Taylor R.G."/>
            <person name="Tivey A."/>
            <person name="Walsh S.V."/>
            <person name="Warren T."/>
            <person name="Whitehead S."/>
            <person name="Woodward J.R."/>
            <person name="Volckaert G."/>
            <person name="Aert R."/>
            <person name="Robben J."/>
            <person name="Grymonprez B."/>
            <person name="Weltjens I."/>
            <person name="Vanstreels E."/>
            <person name="Rieger M."/>
            <person name="Schaefer M."/>
            <person name="Mueller-Auer S."/>
            <person name="Gabel C."/>
            <person name="Fuchs M."/>
            <person name="Duesterhoeft A."/>
            <person name="Fritzc C."/>
            <person name="Holzer E."/>
            <person name="Moestl D."/>
            <person name="Hilbert H."/>
            <person name="Borzym K."/>
            <person name="Langer I."/>
            <person name="Beck A."/>
            <person name="Lehrach H."/>
            <person name="Reinhardt R."/>
            <person name="Pohl T.M."/>
            <person name="Eger P."/>
            <person name="Zimmermann W."/>
            <person name="Wedler H."/>
            <person name="Wambutt R."/>
            <person name="Purnelle B."/>
            <person name="Goffeau A."/>
            <person name="Cadieu E."/>
            <person name="Dreano S."/>
            <person name="Gloux S."/>
            <person name="Lelaure V."/>
            <person name="Mottier S."/>
            <person name="Galibert F."/>
            <person name="Aves S.J."/>
            <person name="Xiang Z."/>
            <person name="Hunt C."/>
            <person name="Moore K."/>
            <person name="Hurst S.M."/>
            <person name="Lucas M."/>
            <person name="Rochet M."/>
            <person name="Gaillardin C."/>
            <person name="Tallada V.A."/>
            <person name="Garzon A."/>
            <person name="Thode G."/>
            <person name="Daga R.R."/>
            <person name="Cruzado L."/>
            <person name="Jimenez J."/>
            <person name="Sanchez M."/>
            <person name="del Rey F."/>
            <person name="Benito J."/>
            <person name="Dominguez A."/>
            <person name="Revuelta J.L."/>
            <person name="Moreno S."/>
            <person name="Armstrong J."/>
            <person name="Forsburg S.L."/>
            <person name="Cerutti L."/>
            <person name="Lowe T."/>
            <person name="McCombie W.R."/>
            <person name="Paulsen I."/>
            <person name="Potashkin J."/>
            <person name="Shpakovski G.V."/>
            <person name="Ussery D."/>
            <person name="Barrell B.G."/>
            <person name="Nurse P."/>
        </authorList>
    </citation>
    <scope>NUCLEOTIDE SEQUENCE [LARGE SCALE GENOMIC DNA]</scope>
    <source>
        <strain>972 / ATCC 24843</strain>
    </source>
</reference>
<reference key="2">
    <citation type="journal article" date="2011" name="Science">
        <title>Comparative functional genomics of the fission yeasts.</title>
        <authorList>
            <person name="Rhind N."/>
            <person name="Chen Z."/>
            <person name="Yassour M."/>
            <person name="Thompson D.A."/>
            <person name="Haas B.J."/>
            <person name="Habib N."/>
            <person name="Wapinski I."/>
            <person name="Roy S."/>
            <person name="Lin M.F."/>
            <person name="Heiman D.I."/>
            <person name="Young S.K."/>
            <person name="Furuya K."/>
            <person name="Guo Y."/>
            <person name="Pidoux A."/>
            <person name="Chen H.M."/>
            <person name="Robbertse B."/>
            <person name="Goldberg J.M."/>
            <person name="Aoki K."/>
            <person name="Bayne E.H."/>
            <person name="Berlin A.M."/>
            <person name="Desjardins C.A."/>
            <person name="Dobbs E."/>
            <person name="Dukaj L."/>
            <person name="Fan L."/>
            <person name="FitzGerald M.G."/>
            <person name="French C."/>
            <person name="Gujja S."/>
            <person name="Hansen K."/>
            <person name="Keifenheim D."/>
            <person name="Levin J.Z."/>
            <person name="Mosher R.A."/>
            <person name="Mueller C.A."/>
            <person name="Pfiffner J."/>
            <person name="Priest M."/>
            <person name="Russ C."/>
            <person name="Smialowska A."/>
            <person name="Swoboda P."/>
            <person name="Sykes S.M."/>
            <person name="Vaughn M."/>
            <person name="Vengrova S."/>
            <person name="Yoder R."/>
            <person name="Zeng Q."/>
            <person name="Allshire R."/>
            <person name="Baulcombe D."/>
            <person name="Birren B.W."/>
            <person name="Brown W."/>
            <person name="Ekwall K."/>
            <person name="Kellis M."/>
            <person name="Leatherwood J."/>
            <person name="Levin H."/>
            <person name="Margalit H."/>
            <person name="Martienssen R."/>
            <person name="Nieduszynski C.A."/>
            <person name="Spatafora J.W."/>
            <person name="Friedman N."/>
            <person name="Dalgaard J.Z."/>
            <person name="Baumann P."/>
            <person name="Niki H."/>
            <person name="Regev A."/>
            <person name="Nusbaum C."/>
        </authorList>
    </citation>
    <scope>REVISION OF GENE MODEL</scope>
</reference>
<reference key="3">
    <citation type="journal article" date="2006" name="Nat. Biotechnol.">
        <title>ORFeome cloning and global analysis of protein localization in the fission yeast Schizosaccharomyces pombe.</title>
        <authorList>
            <person name="Matsuyama A."/>
            <person name="Arai R."/>
            <person name="Yashiroda Y."/>
            <person name="Shirai A."/>
            <person name="Kamata A."/>
            <person name="Sekido S."/>
            <person name="Kobayashi Y."/>
            <person name="Hashimoto A."/>
            <person name="Hamamoto M."/>
            <person name="Hiraoka Y."/>
            <person name="Horinouchi S."/>
            <person name="Yoshida M."/>
        </authorList>
    </citation>
    <scope>SUBCELLULAR LOCATION [LARGE SCALE ANALYSIS]</scope>
</reference>
<organism>
    <name type="scientific">Schizosaccharomyces pombe (strain 972 / ATCC 24843)</name>
    <name type="common">Fission yeast</name>
    <dbReference type="NCBI Taxonomy" id="284812"/>
    <lineage>
        <taxon>Eukaryota</taxon>
        <taxon>Fungi</taxon>
        <taxon>Dikarya</taxon>
        <taxon>Ascomycota</taxon>
        <taxon>Taphrinomycotina</taxon>
        <taxon>Schizosaccharomycetes</taxon>
        <taxon>Schizosaccharomycetales</taxon>
        <taxon>Schizosaccharomycetaceae</taxon>
        <taxon>Schizosaccharomyces</taxon>
    </lineage>
</organism>
<accession>O13869</accession>
<name>GUF1_SCHPO</name>
<feature type="transit peptide" description="Mitochondrion" evidence="1">
    <location>
        <begin position="1"/>
        <end position="44"/>
    </location>
</feature>
<feature type="chain" id="PRO_0000091561" description="Translation factor guf1, mitochondrial">
    <location>
        <begin position="45"/>
        <end position="652"/>
    </location>
</feature>
<feature type="domain" description="tr-type G">
    <location>
        <begin position="56"/>
        <end position="237"/>
    </location>
</feature>
<feature type="binding site" evidence="1">
    <location>
        <begin position="65"/>
        <end position="72"/>
    </location>
    <ligand>
        <name>GTP</name>
        <dbReference type="ChEBI" id="CHEBI:37565"/>
    </ligand>
</feature>
<feature type="binding site" evidence="1">
    <location>
        <begin position="130"/>
        <end position="134"/>
    </location>
    <ligand>
        <name>GTP</name>
        <dbReference type="ChEBI" id="CHEBI:37565"/>
    </ligand>
</feature>
<feature type="binding site" evidence="1">
    <location>
        <begin position="184"/>
        <end position="187"/>
    </location>
    <ligand>
        <name>GTP</name>
        <dbReference type="ChEBI" id="CHEBI:37565"/>
    </ligand>
</feature>